<organism>
    <name type="scientific">Callithrix jacchus</name>
    <name type="common">White-tufted-ear marmoset</name>
    <dbReference type="NCBI Taxonomy" id="9483"/>
    <lineage>
        <taxon>Eukaryota</taxon>
        <taxon>Metazoa</taxon>
        <taxon>Chordata</taxon>
        <taxon>Craniata</taxon>
        <taxon>Vertebrata</taxon>
        <taxon>Euteleostomi</taxon>
        <taxon>Mammalia</taxon>
        <taxon>Eutheria</taxon>
        <taxon>Euarchontoglires</taxon>
        <taxon>Primates</taxon>
        <taxon>Haplorrhini</taxon>
        <taxon>Platyrrhini</taxon>
        <taxon>Cebidae</taxon>
        <taxon>Callitrichinae</taxon>
        <taxon>Callithrix</taxon>
        <taxon>Callithrix</taxon>
    </lineage>
</organism>
<dbReference type="EC" id="3.4.21.-"/>
<dbReference type="EMBL" id="EF692506">
    <property type="protein sequence ID" value="ABV59226.1"/>
    <property type="molecule type" value="mRNA"/>
</dbReference>
<dbReference type="RefSeq" id="NP_001254682.1">
    <property type="nucleotide sequence ID" value="NM_001267753.1"/>
</dbReference>
<dbReference type="SMR" id="A8T688"/>
<dbReference type="FunCoup" id="A8T688">
    <property type="interactions" value="60"/>
</dbReference>
<dbReference type="STRING" id="9483.ENSCJAP00000076181"/>
<dbReference type="MEROPS" id="S08.039"/>
<dbReference type="GlyCosmos" id="A8T688">
    <property type="glycosylation" value="1 site, No reported glycans"/>
</dbReference>
<dbReference type="GeneID" id="100395116"/>
<dbReference type="KEGG" id="cjc:100395116"/>
<dbReference type="CTD" id="255738"/>
<dbReference type="eggNOG" id="KOG1153">
    <property type="taxonomic scope" value="Eukaryota"/>
</dbReference>
<dbReference type="InParanoid" id="A8T688"/>
<dbReference type="OrthoDB" id="206201at2759"/>
<dbReference type="Proteomes" id="UP000008225">
    <property type="component" value="Unplaced"/>
</dbReference>
<dbReference type="GO" id="GO:0009986">
    <property type="term" value="C:cell surface"/>
    <property type="evidence" value="ECO:0000250"/>
    <property type="project" value="UniProtKB"/>
</dbReference>
<dbReference type="GO" id="GO:0005737">
    <property type="term" value="C:cytoplasm"/>
    <property type="evidence" value="ECO:0000250"/>
    <property type="project" value="UniProtKB"/>
</dbReference>
<dbReference type="GO" id="GO:0005769">
    <property type="term" value="C:early endosome"/>
    <property type="evidence" value="ECO:0000250"/>
    <property type="project" value="UniProtKB"/>
</dbReference>
<dbReference type="GO" id="GO:0005783">
    <property type="term" value="C:endoplasmic reticulum"/>
    <property type="evidence" value="ECO:0000250"/>
    <property type="project" value="UniProtKB"/>
</dbReference>
<dbReference type="GO" id="GO:0005615">
    <property type="term" value="C:extracellular space"/>
    <property type="evidence" value="ECO:0007669"/>
    <property type="project" value="TreeGrafter"/>
</dbReference>
<dbReference type="GO" id="GO:0005794">
    <property type="term" value="C:Golgi apparatus"/>
    <property type="evidence" value="ECO:0000250"/>
    <property type="project" value="UniProtKB"/>
</dbReference>
<dbReference type="GO" id="GO:0005770">
    <property type="term" value="C:late endosome"/>
    <property type="evidence" value="ECO:0000250"/>
    <property type="project" value="UniProtKB"/>
</dbReference>
<dbReference type="GO" id="GO:0005764">
    <property type="term" value="C:lysosome"/>
    <property type="evidence" value="ECO:0000250"/>
    <property type="project" value="UniProtKB"/>
</dbReference>
<dbReference type="GO" id="GO:0034185">
    <property type="term" value="F:apolipoprotein binding"/>
    <property type="evidence" value="ECO:0000250"/>
    <property type="project" value="UniProtKB"/>
</dbReference>
<dbReference type="GO" id="GO:0030169">
    <property type="term" value="F:low-density lipoprotein particle binding"/>
    <property type="evidence" value="ECO:0000250"/>
    <property type="project" value="UniProtKB"/>
</dbReference>
<dbReference type="GO" id="GO:0004252">
    <property type="term" value="F:serine-type endopeptidase activity"/>
    <property type="evidence" value="ECO:0007669"/>
    <property type="project" value="InterPro"/>
</dbReference>
<dbReference type="GO" id="GO:0034189">
    <property type="term" value="F:very-low-density lipoprotein particle binding"/>
    <property type="evidence" value="ECO:0000250"/>
    <property type="project" value="UniProtKB"/>
</dbReference>
<dbReference type="GO" id="GO:0006915">
    <property type="term" value="P:apoptotic process"/>
    <property type="evidence" value="ECO:0007669"/>
    <property type="project" value="UniProtKB-KW"/>
</dbReference>
<dbReference type="GO" id="GO:0008203">
    <property type="term" value="P:cholesterol metabolic process"/>
    <property type="evidence" value="ECO:0007669"/>
    <property type="project" value="UniProtKB-KW"/>
</dbReference>
<dbReference type="GO" id="GO:0032802">
    <property type="term" value="P:low-density lipoprotein particle receptor catabolic process"/>
    <property type="evidence" value="ECO:0000250"/>
    <property type="project" value="UniProtKB"/>
</dbReference>
<dbReference type="GO" id="GO:0006508">
    <property type="term" value="P:proteolysis"/>
    <property type="evidence" value="ECO:0007669"/>
    <property type="project" value="UniProtKB-KW"/>
</dbReference>
<dbReference type="GO" id="GO:0043523">
    <property type="term" value="P:regulation of neuron apoptotic process"/>
    <property type="evidence" value="ECO:0000250"/>
    <property type="project" value="UniProtKB"/>
</dbReference>
<dbReference type="CDD" id="cd16839">
    <property type="entry name" value="PCSK9_C-CRD"/>
    <property type="match status" value="1"/>
</dbReference>
<dbReference type="CDD" id="cd04077">
    <property type="entry name" value="Peptidases_S8_PCSK9_ProteinaseK_like"/>
    <property type="match status" value="1"/>
</dbReference>
<dbReference type="FunFam" id="2.60.120.690:FF:000001">
    <property type="entry name" value="Proprotein convertase subtilisin/kexin type 9"/>
    <property type="match status" value="1"/>
</dbReference>
<dbReference type="FunFam" id="3.30.70.80:FF:000004">
    <property type="entry name" value="Proprotein convertase subtilisin/kexin type 9"/>
    <property type="match status" value="1"/>
</dbReference>
<dbReference type="FunFam" id="3.40.50.200:FF:000016">
    <property type="entry name" value="Proprotein convertase subtilisin/kexin type 9"/>
    <property type="match status" value="1"/>
</dbReference>
<dbReference type="Gene3D" id="3.30.70.80">
    <property type="entry name" value="Peptidase S8 propeptide/proteinase inhibitor I9"/>
    <property type="match status" value="1"/>
</dbReference>
<dbReference type="Gene3D" id="3.40.50.200">
    <property type="entry name" value="Peptidase S8/S53 domain"/>
    <property type="match status" value="1"/>
</dbReference>
<dbReference type="Gene3D" id="2.60.120.690">
    <property type="entry name" value="Proprotein convertase subtilisin/kexin type 9"/>
    <property type="match status" value="1"/>
</dbReference>
<dbReference type="InterPro" id="IPR041254">
    <property type="entry name" value="PCSK9_C1"/>
</dbReference>
<dbReference type="InterPro" id="IPR041052">
    <property type="entry name" value="PCSK9_C2"/>
</dbReference>
<dbReference type="InterPro" id="IPR041051">
    <property type="entry name" value="PCSK9_C3"/>
</dbReference>
<dbReference type="InterPro" id="IPR034193">
    <property type="entry name" value="PCSK9_ProteinaseK-like"/>
</dbReference>
<dbReference type="InterPro" id="IPR000209">
    <property type="entry name" value="Peptidase_S8/S53_dom"/>
</dbReference>
<dbReference type="InterPro" id="IPR036852">
    <property type="entry name" value="Peptidase_S8/S53_dom_sf"/>
</dbReference>
<dbReference type="InterPro" id="IPR050131">
    <property type="entry name" value="Peptidase_S8_subtilisin-like"/>
</dbReference>
<dbReference type="InterPro" id="IPR015500">
    <property type="entry name" value="Peptidase_S8_subtilisin-rel"/>
</dbReference>
<dbReference type="InterPro" id="IPR010259">
    <property type="entry name" value="S8pro/Inhibitor_I9"/>
</dbReference>
<dbReference type="InterPro" id="IPR037045">
    <property type="entry name" value="S8pro/Inhibitor_I9_sf"/>
</dbReference>
<dbReference type="PANTHER" id="PTHR43806">
    <property type="entry name" value="PEPTIDASE S8"/>
    <property type="match status" value="1"/>
</dbReference>
<dbReference type="PANTHER" id="PTHR43806:SF60">
    <property type="entry name" value="PROPROTEIN CONVERTASE SUBTILISIN_KEXIN TYPE 9"/>
    <property type="match status" value="1"/>
</dbReference>
<dbReference type="Pfam" id="PF05922">
    <property type="entry name" value="Inhibitor_I9"/>
    <property type="match status" value="1"/>
</dbReference>
<dbReference type="Pfam" id="PF18459">
    <property type="entry name" value="PCSK9_C1"/>
    <property type="match status" value="1"/>
</dbReference>
<dbReference type="Pfam" id="PF18464">
    <property type="entry name" value="PCSK9_C2"/>
    <property type="match status" value="1"/>
</dbReference>
<dbReference type="Pfam" id="PF18463">
    <property type="entry name" value="PCSK9_C3"/>
    <property type="match status" value="1"/>
</dbReference>
<dbReference type="Pfam" id="PF00082">
    <property type="entry name" value="Peptidase_S8"/>
    <property type="match status" value="1"/>
</dbReference>
<dbReference type="PRINTS" id="PR00723">
    <property type="entry name" value="SUBTILISIN"/>
</dbReference>
<dbReference type="SUPFAM" id="SSF54897">
    <property type="entry name" value="Protease propeptides/inhibitors"/>
    <property type="match status" value="1"/>
</dbReference>
<dbReference type="SUPFAM" id="SSF52743">
    <property type="entry name" value="Subtilisin-like"/>
    <property type="match status" value="1"/>
</dbReference>
<dbReference type="PROSITE" id="PS51892">
    <property type="entry name" value="SUBTILASE"/>
    <property type="match status" value="1"/>
</dbReference>
<accession>A8T688</accession>
<protein>
    <recommendedName>
        <fullName>Proprotein convertase subtilisin/kexin type 9</fullName>
        <ecNumber>3.4.21.-</ecNumber>
    </recommendedName>
    <alternativeName>
        <fullName>Proprotein convertase 9</fullName>
        <shortName>PC9</shortName>
    </alternativeName>
    <alternativeName>
        <fullName>Subtilisin/kexin-like protease PC9</fullName>
    </alternativeName>
</protein>
<feature type="signal peptide" evidence="1">
    <location>
        <begin position="1"/>
        <end position="28"/>
    </location>
</feature>
<feature type="propeptide" id="PRO_0000318274" evidence="1">
    <location>
        <begin position="29"/>
        <end position="150"/>
    </location>
</feature>
<feature type="chain" id="PRO_0000318275" description="Proprotein convertase subtilisin/kexin type 9">
    <location>
        <begin position="151"/>
        <end position="690"/>
    </location>
</feature>
<feature type="domain" description="Inhibitor I9" evidence="3">
    <location>
        <begin position="75"/>
        <end position="147"/>
    </location>
</feature>
<feature type="domain" description="Peptidase S8" evidence="4">
    <location>
        <begin position="153"/>
        <end position="459"/>
    </location>
</feature>
<feature type="region of interest" description="C-terminal domain" evidence="1">
    <location>
        <begin position="448"/>
        <end position="690"/>
    </location>
</feature>
<feature type="active site" description="Charge relay system" evidence="4">
    <location>
        <position position="184"/>
    </location>
</feature>
<feature type="active site" description="Charge relay system" evidence="4">
    <location>
        <position position="224"/>
    </location>
</feature>
<feature type="active site" description="Charge relay system" evidence="4">
    <location>
        <position position="384"/>
    </location>
</feature>
<feature type="site" description="Cleavage; by autolysis" evidence="1">
    <location>
        <begin position="150"/>
        <end position="151"/>
    </location>
</feature>
<feature type="site" description="Cleavage; by furin and PCSK5" evidence="1">
    <location>
        <begin position="216"/>
        <end position="217"/>
    </location>
</feature>
<feature type="modified residue" description="Sulfotyrosine" evidence="1">
    <location>
        <position position="36"/>
    </location>
</feature>
<feature type="modified residue" description="Phosphoserine" evidence="2">
    <location>
        <position position="45"/>
    </location>
</feature>
<feature type="modified residue" description="Phosphoserine" evidence="2">
    <location>
        <position position="686"/>
    </location>
</feature>
<feature type="glycosylation site" description="N-linked (GlcNAc...) asparagine" evidence="3">
    <location>
        <position position="531"/>
    </location>
</feature>
<feature type="disulfide bond" evidence="3">
    <location>
        <begin position="221"/>
        <end position="253"/>
    </location>
</feature>
<feature type="disulfide bond" evidence="3">
    <location>
        <begin position="321"/>
        <end position="356"/>
    </location>
</feature>
<feature type="disulfide bond" evidence="3">
    <location>
        <begin position="455"/>
        <end position="525"/>
    </location>
</feature>
<feature type="disulfide bond" evidence="3">
    <location>
        <begin position="475"/>
        <end position="524"/>
    </location>
</feature>
<feature type="disulfide bond" evidence="3">
    <location>
        <begin position="484"/>
        <end position="507"/>
    </location>
</feature>
<feature type="disulfide bond" evidence="3">
    <location>
        <begin position="532"/>
        <end position="599"/>
    </location>
</feature>
<feature type="disulfide bond" evidence="3">
    <location>
        <begin position="550"/>
        <end position="598"/>
    </location>
</feature>
<feature type="disulfide bond" evidence="3">
    <location>
        <begin position="560"/>
        <end position="586"/>
    </location>
</feature>
<feature type="disulfide bond" evidence="3">
    <location>
        <begin position="606"/>
        <end position="677"/>
    </location>
</feature>
<feature type="disulfide bond" evidence="3">
    <location>
        <begin position="624"/>
        <end position="676"/>
    </location>
</feature>
<feature type="disulfide bond" evidence="3">
    <location>
        <begin position="633"/>
        <end position="652"/>
    </location>
</feature>
<proteinExistence type="evidence at transcript level"/>
<comment type="function">
    <text evidence="1">Crucial player in the regulation of plasma cholesterol homeostasis. Binds to low-density lipid receptor family members: low density lipoprotein receptor (LDLR), very low density lipoprotein receptor (VLDLR), apolipoprotein E receptor (LRP1/APOER) and apolipoprotein receptor 2 (LRP8/APOER2), and promotes their degradation in intracellular acidic compartments. Acts via a non-proteolytic mechanism to enhance the degradation of the hepatic LDLR through a clathrin LDLRAP1/ARH-mediated pathway. May prevent the recycling of LDLR from endosomes to the cell surface or direct it to lysosomes for degradation. Can induce ubiquitination of LDLR leading to its subsequent degradation. Inhibits intracellular degradation of APOB via the autophagosome/lysosome pathway in a LDLR-independent manner. Involved in the disposal of non-acetylated intermediates of BACE1 in the early secretory pathway. Inhibits epithelial Na(+) channel (ENaC)-mediated Na(+) absorption by reducing ENaC surface expression primarily by increasing its proteasomal degradation. Regulates neuronal apoptosis via modulation of LRP8/APOER2 levels and related anti-apoptotic signaling pathways (By similarity).</text>
</comment>
<comment type="cofactor">
    <cofactor evidence="1">
        <name>Ca(2+)</name>
        <dbReference type="ChEBI" id="CHEBI:29108"/>
    </cofactor>
</comment>
<comment type="activity regulation">
    <text evidence="1">Its proteolytic activity is autoinhibited by the non-covalent binding of the propeptide to the catalytic domain. Inhibited by EGTA (By similarity).</text>
</comment>
<comment type="subunit">
    <text evidence="2">Monomer. Can self-associate to form dimers and higher multimers which may have increased LDLR degrading activity. The precursor protein but not the mature protein may form multimers. Interacts with APOB, VLDLR, LRP8/APOER2 and BACE1. The full-length immature form (pro-PCSK9) interacts with SCNN1A, SCNN1B and SCNN1G. The pro-PCSK9 form (via C-terminal domain) interacts with LDLR. Interacts (via the C-terminal domain) with ANXA2 (via repeat Annexin 1); the interaction inhibits the degradation of LDLR.</text>
</comment>
<comment type="subcellular location">
    <subcellularLocation>
        <location evidence="1">Cytoplasm</location>
    </subcellularLocation>
    <subcellularLocation>
        <location evidence="1">Secreted</location>
    </subcellularLocation>
    <subcellularLocation>
        <location evidence="1">Endosome</location>
    </subcellularLocation>
    <subcellularLocation>
        <location evidence="1">Lysosome</location>
    </subcellularLocation>
    <subcellularLocation>
        <location evidence="1">Cell surface</location>
    </subcellularLocation>
    <subcellularLocation>
        <location evidence="1">Endoplasmic reticulum</location>
    </subcellularLocation>
    <subcellularLocation>
        <location evidence="1">Golgi apparatus</location>
    </subcellularLocation>
    <text evidence="1">Autocatalytic cleavage is required to transport it from the endoplasmic reticulum to the Golgi apparatus and for the secretion of the mature protein. Localizes to the endoplasmic reticulum in the absence of LDLR and colocalizes to the cell surface and to the endosomes/lysosomes in the presence of LDLR. The sorting to the cell surface and endosomes is required in order to fully promote LDLR degradation (By similarity).</text>
</comment>
<comment type="domain">
    <text evidence="1">The C-terminal domain (CRD) is essential for the LDLR-binding and degrading activities.</text>
</comment>
<comment type="domain">
    <text evidence="1">The catalytic domain is responsible for mediating its self-association.</text>
</comment>
<comment type="PTM">
    <text evidence="1">Cleavage by furin and PCSK5 generates a truncated inactive protein that is unable to induce LDLR degradation.</text>
</comment>
<comment type="PTM">
    <text evidence="1">Undergoes autocatalytic cleavage in the endoplasmic reticulum to release the propeptide from the N-terminus and the cleavage of the propeptide is strictly required for its maturation and activation. The cleaved propeptide however remains associated with the catalytic domain through non-covalent interactions, preventing potential substrates from accessing its active site. As a result, it is secreted from cells as a propeptide-containing, enzymatically inactive protein (By similarity).</text>
</comment>
<comment type="PTM">
    <text evidence="1">Phosphorylation protects the propeptide against proteolysis.</text>
</comment>
<comment type="similarity">
    <text evidence="5">Belongs to the peptidase S8 family.</text>
</comment>
<name>PCSK9_CALJA</name>
<sequence>MGTVSSRRLWWPLPLLLLLLLGPTGTRAQEEDDDDYEELVLALRSEEDGLVDALQHGATATFHRCAKDSWRLPGTYVVVLKEETHRSQPERTARRLQAQAARRGYLIKLLHVFHDLLPGFLVKMSRDLLELALRLPHVDYIEEDSSVFAQSIPWNLERITPARYRADEYQPPNGGSLVEVYLLDTSIQSGHREIEGRVMVTDFGSVPEEDGTRFHRQASKCDSHGTHLAGVVSGRDAGVAKGASLRSLRVLNCQGKGTVSSTLIGLEFIRKSQLVQPVGPLVVLLPLAGGYSRVLNAACQRLARAGVVLVAAAGNFRDDACLYSPASAPEVITVGATNAQDQPVTLGTLGTNFGRCVDLFAPGEDIIGASSDCSTCFVSRSGTSQAAAHVAGIAAMMLSAKPELTLAELRQRLIHFSAKDVINEAWFPEDQRVLTPNLVAALPPSTHGAGWQLFCRTVWSAHSGPTRMATAMARCAPDEELLSCSSFSRSGRRRGERIEAQGGRRVCLAHNAFGGEGVYAIARCCLLPQANCSVHTAPPAGAGMGTRAHCHQQGHILTGCSSHWEVEDLGTHKPPVLRPGGQHDQCMGHRGASTHASCCHAPGLECKVKEHGLPAPQEQVTVTCEEGWTLTGCSALPGTSHILGAYAVDDTCVVRSRDVSTTSSTSEETVATVAICCRSQHLAQASQELQ</sequence>
<reference key="1">
    <citation type="journal article" date="2007" name="PLoS ONE">
        <title>Evidence for positive selection in the C-terminal domain of the cholesterol metabolism gene PCSK9 based on phylogenetic analysis in 14 primate species.</title>
        <authorList>
            <person name="Ding K."/>
            <person name="McDonough S.J."/>
            <person name="Kullo I.J."/>
        </authorList>
    </citation>
    <scope>NUCLEOTIDE SEQUENCE [MRNA]</scope>
</reference>
<gene>
    <name type="primary">PCSK9</name>
</gene>
<keyword id="KW-0053">Apoptosis</keyword>
<keyword id="KW-0068">Autocatalytic cleavage</keyword>
<keyword id="KW-0106">Calcium</keyword>
<keyword id="KW-0153">Cholesterol metabolism</keyword>
<keyword id="KW-0963">Cytoplasm</keyword>
<keyword id="KW-1015">Disulfide bond</keyword>
<keyword id="KW-0256">Endoplasmic reticulum</keyword>
<keyword id="KW-0967">Endosome</keyword>
<keyword id="KW-0325">Glycoprotein</keyword>
<keyword id="KW-0333">Golgi apparatus</keyword>
<keyword id="KW-0378">Hydrolase</keyword>
<keyword id="KW-0443">Lipid metabolism</keyword>
<keyword id="KW-0458">Lysosome</keyword>
<keyword id="KW-0597">Phosphoprotein</keyword>
<keyword id="KW-0645">Protease</keyword>
<keyword id="KW-1185">Reference proteome</keyword>
<keyword id="KW-0964">Secreted</keyword>
<keyword id="KW-0720">Serine protease</keyword>
<keyword id="KW-0732">Signal</keyword>
<keyword id="KW-0753">Steroid metabolism</keyword>
<keyword id="KW-1207">Sterol metabolism</keyword>
<keyword id="KW-0765">Sulfation</keyword>
<keyword id="KW-0865">Zymogen</keyword>
<evidence type="ECO:0000250" key="1"/>
<evidence type="ECO:0000250" key="2">
    <source>
        <dbReference type="UniProtKB" id="Q8NBP7"/>
    </source>
</evidence>
<evidence type="ECO:0000255" key="3"/>
<evidence type="ECO:0000255" key="4">
    <source>
        <dbReference type="PROSITE-ProRule" id="PRU01240"/>
    </source>
</evidence>
<evidence type="ECO:0000305" key="5"/>